<comment type="function">
    <text>One gap junction consists of a cluster of closely packed pairs of transmembrane channels, the connexons, through which materials of low MW diffuse from one cell to a neighboring cell.</text>
</comment>
<comment type="subunit">
    <text>A connexon is composed of a hexamer of connexins.</text>
</comment>
<comment type="interaction">
    <interactant intactId="EBI-6918707">
        <id>P35212</id>
    </interactant>
    <interactant intactId="EBI-712921">
        <id>P60033</id>
        <label>CD81</label>
    </interactant>
    <organismsDiffer>false</organismsDiffer>
    <experiments>3</experiments>
</comment>
<comment type="interaction">
    <interactant intactId="EBI-6918707">
        <id>P35212</id>
    </interactant>
    <interactant intactId="EBI-12070086">
        <id>Q5J8X5</id>
        <label>MS4A13</label>
    </interactant>
    <organismsDiffer>false</organismsDiffer>
    <experiments>3</experiments>
</comment>
<comment type="interaction">
    <interactant intactId="EBI-6918707">
        <id>P35212</id>
    </interactant>
    <interactant intactId="EBI-2624570">
        <id>P35372</id>
        <label>OPRM1</label>
    </interactant>
    <organismsDiffer>false</organismsDiffer>
    <experiments>3</experiments>
</comment>
<comment type="interaction">
    <interactant intactId="EBI-6918707">
        <id>P35212</id>
    </interactant>
    <interactant intactId="EBI-2548832">
        <id>Q8N661</id>
        <label>TMEM86B</label>
    </interactant>
    <organismsDiffer>false</organismsDiffer>
    <experiments>3</experiments>
</comment>
<comment type="interaction">
    <interactant intactId="EBI-6918707">
        <id>P35212</id>
    </interactant>
    <interactant intactId="EBI-2857623">
        <id>Q96FB2</id>
    </interactant>
    <organismsDiffer>false</organismsDiffer>
    <experiments>3</experiments>
</comment>
<comment type="subcellular location">
    <subcellularLocation>
        <location>Cell membrane</location>
        <topology>Multi-pass membrane protein</topology>
    </subcellularLocation>
    <subcellularLocation>
        <location>Cell junction</location>
        <location>Gap junction</location>
    </subcellularLocation>
</comment>
<comment type="tissue specificity">
    <text>Expressed in multiple organs and tissues, including heart, uterus, ovary, and blood vessel endothelium.</text>
</comment>
<comment type="similarity">
    <text evidence="8">Belongs to the connexin family. Alpha-type (group II) subfamily.</text>
</comment>
<proteinExistence type="evidence at protein level"/>
<sequence>MGDWGFLEKLLDQVQEHSTVVGKIWLTVLFIFRILILGLAGESVWGDEQSDFECNTAQPGCTNVCYDQAFPISHIRYWVLQFLFVSTPTLVYLGHVIYLSRREERLRQKEGELRALPAKDPQVERALAAVERQMAKISVAEDGRLRIRGALMGTYVASVLCKSVLEAGFLYGQWRLYGWTMEPVFVCQRAPCPYLVDCFVSRPTEKTIFIIFMLVVGLISLVLNLLELVHLLCRCLSRGMRARQGQDAPPTQGTSSDPYTDQVFFYLPVGQGPSSPPCPTYNGLSSSEQNWANLTTEERLASSRPPLFLDPPPQNGQKPPSRPSSSASKKQYV</sequence>
<protein>
    <recommendedName>
        <fullName>Gap junction alpha-4 protein</fullName>
    </recommendedName>
    <alternativeName>
        <fullName>Connexin-37</fullName>
        <shortName>Cx37</shortName>
    </alternativeName>
</protein>
<name>CXA4_HUMAN</name>
<accession>P35212</accession>
<accession>A8K698</accession>
<accession>D3DPR4</accession>
<accession>Q9P106</accession>
<accession>Q9UBL1</accession>
<accession>Q9UNA9</accession>
<accession>Q9UNB0</accession>
<accession>Q9UNB1</accession>
<accession>Q9Y5N7</accession>
<organism>
    <name type="scientific">Homo sapiens</name>
    <name type="common">Human</name>
    <dbReference type="NCBI Taxonomy" id="9606"/>
    <lineage>
        <taxon>Eukaryota</taxon>
        <taxon>Metazoa</taxon>
        <taxon>Chordata</taxon>
        <taxon>Craniata</taxon>
        <taxon>Vertebrata</taxon>
        <taxon>Euteleostomi</taxon>
        <taxon>Mammalia</taxon>
        <taxon>Eutheria</taxon>
        <taxon>Euarchontoglires</taxon>
        <taxon>Primates</taxon>
        <taxon>Haplorrhini</taxon>
        <taxon>Catarrhini</taxon>
        <taxon>Hominidae</taxon>
        <taxon>Homo</taxon>
    </lineage>
</organism>
<gene>
    <name type="primary">GJA4</name>
</gene>
<keyword id="KW-0965">Cell junction</keyword>
<keyword id="KW-1003">Cell membrane</keyword>
<keyword id="KW-0303">Gap junction</keyword>
<keyword id="KW-0472">Membrane</keyword>
<keyword id="KW-1267">Proteomics identification</keyword>
<keyword id="KW-1185">Reference proteome</keyword>
<keyword id="KW-0812">Transmembrane</keyword>
<keyword id="KW-1133">Transmembrane helix</keyword>
<feature type="chain" id="PRO_0000057814" description="Gap junction alpha-4 protein">
    <location>
        <begin position="1"/>
        <end position="333"/>
    </location>
</feature>
<feature type="topological domain" description="Cytoplasmic" evidence="1">
    <location>
        <begin position="1"/>
        <end position="20"/>
    </location>
</feature>
<feature type="transmembrane region" description="Helical" evidence="1">
    <location>
        <begin position="21"/>
        <end position="40"/>
    </location>
</feature>
<feature type="topological domain" description="Extracellular" evidence="1">
    <location>
        <begin position="41"/>
        <end position="76"/>
    </location>
</feature>
<feature type="transmembrane region" description="Helical" evidence="1">
    <location>
        <begin position="77"/>
        <end position="99"/>
    </location>
</feature>
<feature type="topological domain" description="Cytoplasmic" evidence="1">
    <location>
        <begin position="100"/>
        <end position="148"/>
    </location>
</feature>
<feature type="transmembrane region" description="Helical" evidence="1">
    <location>
        <begin position="149"/>
        <end position="165"/>
    </location>
</feature>
<feature type="topological domain" description="Extracellular" evidence="1">
    <location>
        <begin position="166"/>
        <end position="207"/>
    </location>
</feature>
<feature type="transmembrane region" description="Helical" evidence="1">
    <location>
        <begin position="208"/>
        <end position="230"/>
    </location>
</feature>
<feature type="topological domain" description="Cytoplasmic" evidence="1">
    <location>
        <begin position="231"/>
        <end position="333"/>
    </location>
</feature>
<feature type="region of interest" description="Disordered" evidence="2">
    <location>
        <begin position="292"/>
        <end position="333"/>
    </location>
</feature>
<feature type="compositionally biased region" description="Low complexity" evidence="2">
    <location>
        <begin position="323"/>
        <end position="333"/>
    </location>
</feature>
<feature type="sequence variant" id="VAR_009159" evidence="6">
    <original>P</original>
    <variation>S</variation>
    <location>
        <position position="71"/>
    </location>
</feature>
<feature type="sequence variant" id="VAR_009160" description="In dbSNP:rs147128480." evidence="6">
    <original>A</original>
    <variation>V</variation>
    <location>
        <position position="128"/>
    </location>
</feature>
<feature type="sequence variant" id="VAR_009161" description="In dbSNP:rs41266431." evidence="5 6 7">
    <original>V</original>
    <variation>I</variation>
    <location>
        <position position="130"/>
    </location>
</feature>
<feature type="sequence variant" id="VAR_009162" description="In allele CX37*2; dbSNP:rs1764391." evidence="3 4 6 7">
    <original>P</original>
    <variation>S</variation>
    <location>
        <position position="319"/>
    </location>
</feature>
<evidence type="ECO:0000255" key="1"/>
<evidence type="ECO:0000256" key="2">
    <source>
        <dbReference type="SAM" id="MobiDB-lite"/>
    </source>
</evidence>
<evidence type="ECO:0000269" key="3">
    <source>
    </source>
</evidence>
<evidence type="ECO:0000269" key="4">
    <source>
    </source>
</evidence>
<evidence type="ECO:0000269" key="5">
    <source>
    </source>
</evidence>
<evidence type="ECO:0000269" key="6">
    <source ref="3"/>
</evidence>
<evidence type="ECO:0000269" key="7">
    <source ref="4"/>
</evidence>
<evidence type="ECO:0000305" key="8"/>
<reference key="1">
    <citation type="journal article" date="1993" name="J. Clin. Invest.">
        <title>Molecular cloning and functional expression of human connexin37, an endothelial cell gap junction protein.</title>
        <authorList>
            <person name="Reed K.E."/>
            <person name="Westphale E.M."/>
            <person name="Larson D.M."/>
            <person name="Wang H.-Z."/>
            <person name="Veenstra R.D."/>
            <person name="Beyer E.C."/>
        </authorList>
    </citation>
    <scope>NUCLEOTIDE SEQUENCE [MRNA]</scope>
</reference>
<reference key="2">
    <citation type="submission" date="1999-10" db="EMBL/GenBank/DDBJ databases">
        <authorList>
            <person name="Beyer E.C."/>
        </authorList>
    </citation>
    <scope>SEQUENCE REVISION</scope>
</reference>
<reference key="3">
    <citation type="submission" date="1999-03" db="EMBL/GenBank/DDBJ databases">
        <title>A connexin 37 genotypic variant in atherosclerosis.</title>
        <authorList>
            <person name="van Zeijl L."/>
            <person name="Cotgreave I.A."/>
        </authorList>
    </citation>
    <scope>NUCLEOTIDE SEQUENCE [GENOMIC DNA]</scope>
    <scope>VARIANTS SER-71; VAL-128; ILE-130 AND SER-319</scope>
</reference>
<reference key="4">
    <citation type="submission" date="1999-08" db="EMBL/GenBank/DDBJ databases">
        <title>Functional expression and biophysical properties of two polymorphic forms of human connexin37.</title>
        <authorList>
            <person name="Kumari S."/>
            <person name="Varadaraj K."/>
            <person name="Valiunas V."/>
            <person name="Ramanan S.V."/>
            <person name="Beyer E.C."/>
            <person name="Brink P.R."/>
        </authorList>
    </citation>
    <scope>NUCLEOTIDE SEQUENCE [MRNA]</scope>
    <scope>VARIANTS ILE-130 AND SER-319</scope>
</reference>
<reference key="5">
    <citation type="journal article" date="2004" name="Nat. Genet.">
        <title>Complete sequencing and characterization of 21,243 full-length human cDNAs.</title>
        <authorList>
            <person name="Ota T."/>
            <person name="Suzuki Y."/>
            <person name="Nishikawa T."/>
            <person name="Otsuki T."/>
            <person name="Sugiyama T."/>
            <person name="Irie R."/>
            <person name="Wakamatsu A."/>
            <person name="Hayashi K."/>
            <person name="Sato H."/>
            <person name="Nagai K."/>
            <person name="Kimura K."/>
            <person name="Makita H."/>
            <person name="Sekine M."/>
            <person name="Obayashi M."/>
            <person name="Nishi T."/>
            <person name="Shibahara T."/>
            <person name="Tanaka T."/>
            <person name="Ishii S."/>
            <person name="Yamamoto J."/>
            <person name="Saito K."/>
            <person name="Kawai Y."/>
            <person name="Isono Y."/>
            <person name="Nakamura Y."/>
            <person name="Nagahari K."/>
            <person name="Murakami K."/>
            <person name="Yasuda T."/>
            <person name="Iwayanagi T."/>
            <person name="Wagatsuma M."/>
            <person name="Shiratori A."/>
            <person name="Sudo H."/>
            <person name="Hosoiri T."/>
            <person name="Kaku Y."/>
            <person name="Kodaira H."/>
            <person name="Kondo H."/>
            <person name="Sugawara M."/>
            <person name="Takahashi M."/>
            <person name="Kanda K."/>
            <person name="Yokoi T."/>
            <person name="Furuya T."/>
            <person name="Kikkawa E."/>
            <person name="Omura Y."/>
            <person name="Abe K."/>
            <person name="Kamihara K."/>
            <person name="Katsuta N."/>
            <person name="Sato K."/>
            <person name="Tanikawa M."/>
            <person name="Yamazaki M."/>
            <person name="Ninomiya K."/>
            <person name="Ishibashi T."/>
            <person name="Yamashita H."/>
            <person name="Murakawa K."/>
            <person name="Fujimori K."/>
            <person name="Tanai H."/>
            <person name="Kimata M."/>
            <person name="Watanabe M."/>
            <person name="Hiraoka S."/>
            <person name="Chiba Y."/>
            <person name="Ishida S."/>
            <person name="Ono Y."/>
            <person name="Takiguchi S."/>
            <person name="Watanabe S."/>
            <person name="Yosida M."/>
            <person name="Hotuta T."/>
            <person name="Kusano J."/>
            <person name="Kanehori K."/>
            <person name="Takahashi-Fujii A."/>
            <person name="Hara H."/>
            <person name="Tanase T.-O."/>
            <person name="Nomura Y."/>
            <person name="Togiya S."/>
            <person name="Komai F."/>
            <person name="Hara R."/>
            <person name="Takeuchi K."/>
            <person name="Arita M."/>
            <person name="Imose N."/>
            <person name="Musashino K."/>
            <person name="Yuuki H."/>
            <person name="Oshima A."/>
            <person name="Sasaki N."/>
            <person name="Aotsuka S."/>
            <person name="Yoshikawa Y."/>
            <person name="Matsunawa H."/>
            <person name="Ichihara T."/>
            <person name="Shiohata N."/>
            <person name="Sano S."/>
            <person name="Moriya S."/>
            <person name="Momiyama H."/>
            <person name="Satoh N."/>
            <person name="Takami S."/>
            <person name="Terashima Y."/>
            <person name="Suzuki O."/>
            <person name="Nakagawa S."/>
            <person name="Senoh A."/>
            <person name="Mizoguchi H."/>
            <person name="Goto Y."/>
            <person name="Shimizu F."/>
            <person name="Wakebe H."/>
            <person name="Hishigaki H."/>
            <person name="Watanabe T."/>
            <person name="Sugiyama A."/>
            <person name="Takemoto M."/>
            <person name="Kawakami B."/>
            <person name="Yamazaki M."/>
            <person name="Watanabe K."/>
            <person name="Kumagai A."/>
            <person name="Itakura S."/>
            <person name="Fukuzumi Y."/>
            <person name="Fujimori Y."/>
            <person name="Komiyama M."/>
            <person name="Tashiro H."/>
            <person name="Tanigami A."/>
            <person name="Fujiwara T."/>
            <person name="Ono T."/>
            <person name="Yamada K."/>
            <person name="Fujii Y."/>
            <person name="Ozaki K."/>
            <person name="Hirao M."/>
            <person name="Ohmori Y."/>
            <person name="Kawabata A."/>
            <person name="Hikiji T."/>
            <person name="Kobatake N."/>
            <person name="Inagaki H."/>
            <person name="Ikema Y."/>
            <person name="Okamoto S."/>
            <person name="Okitani R."/>
            <person name="Kawakami T."/>
            <person name="Noguchi S."/>
            <person name="Itoh T."/>
            <person name="Shigeta K."/>
            <person name="Senba T."/>
            <person name="Matsumura K."/>
            <person name="Nakajima Y."/>
            <person name="Mizuno T."/>
            <person name="Morinaga M."/>
            <person name="Sasaki M."/>
            <person name="Togashi T."/>
            <person name="Oyama M."/>
            <person name="Hata H."/>
            <person name="Watanabe M."/>
            <person name="Komatsu T."/>
            <person name="Mizushima-Sugano J."/>
            <person name="Satoh T."/>
            <person name="Shirai Y."/>
            <person name="Takahashi Y."/>
            <person name="Nakagawa K."/>
            <person name="Okumura K."/>
            <person name="Nagase T."/>
            <person name="Nomura N."/>
            <person name="Kikuchi H."/>
            <person name="Masuho Y."/>
            <person name="Yamashita R."/>
            <person name="Nakai K."/>
            <person name="Yada T."/>
            <person name="Nakamura Y."/>
            <person name="Ohara O."/>
            <person name="Isogai T."/>
            <person name="Sugano S."/>
        </authorList>
    </citation>
    <scope>NUCLEOTIDE SEQUENCE [LARGE SCALE MRNA]</scope>
    <source>
        <tissue>Placenta</tissue>
    </source>
</reference>
<reference key="6">
    <citation type="submission" date="1999-03" db="EMBL/GenBank/DDBJ databases">
        <title>Connexin 37 mutation screening in anovulatory polycystic ovary syndrome.</title>
        <authorList>
            <person name="Lench N.J."/>
            <person name="Williams G."/>
            <person name="Williams E."/>
            <person name="Gharani N."/>
            <person name="Franks S."/>
        </authorList>
    </citation>
    <scope>NUCLEOTIDE SEQUENCE [GENOMIC DNA]</scope>
</reference>
<reference key="7">
    <citation type="journal article" date="2006" name="Nature">
        <title>The DNA sequence and biological annotation of human chromosome 1.</title>
        <authorList>
            <person name="Gregory S.G."/>
            <person name="Barlow K.F."/>
            <person name="McLay K.E."/>
            <person name="Kaul R."/>
            <person name="Swarbreck D."/>
            <person name="Dunham A."/>
            <person name="Scott C.E."/>
            <person name="Howe K.L."/>
            <person name="Woodfine K."/>
            <person name="Spencer C.C.A."/>
            <person name="Jones M.C."/>
            <person name="Gillson C."/>
            <person name="Searle S."/>
            <person name="Zhou Y."/>
            <person name="Kokocinski F."/>
            <person name="McDonald L."/>
            <person name="Evans R."/>
            <person name="Phillips K."/>
            <person name="Atkinson A."/>
            <person name="Cooper R."/>
            <person name="Jones C."/>
            <person name="Hall R.E."/>
            <person name="Andrews T.D."/>
            <person name="Lloyd C."/>
            <person name="Ainscough R."/>
            <person name="Almeida J.P."/>
            <person name="Ambrose K.D."/>
            <person name="Anderson F."/>
            <person name="Andrew R.W."/>
            <person name="Ashwell R.I.S."/>
            <person name="Aubin K."/>
            <person name="Babbage A.K."/>
            <person name="Bagguley C.L."/>
            <person name="Bailey J."/>
            <person name="Beasley H."/>
            <person name="Bethel G."/>
            <person name="Bird C.P."/>
            <person name="Bray-Allen S."/>
            <person name="Brown J.Y."/>
            <person name="Brown A.J."/>
            <person name="Buckley D."/>
            <person name="Burton J."/>
            <person name="Bye J."/>
            <person name="Carder C."/>
            <person name="Chapman J.C."/>
            <person name="Clark S.Y."/>
            <person name="Clarke G."/>
            <person name="Clee C."/>
            <person name="Cobley V."/>
            <person name="Collier R.E."/>
            <person name="Corby N."/>
            <person name="Coville G.J."/>
            <person name="Davies J."/>
            <person name="Deadman R."/>
            <person name="Dunn M."/>
            <person name="Earthrowl M."/>
            <person name="Ellington A.G."/>
            <person name="Errington H."/>
            <person name="Frankish A."/>
            <person name="Frankland J."/>
            <person name="French L."/>
            <person name="Garner P."/>
            <person name="Garnett J."/>
            <person name="Gay L."/>
            <person name="Ghori M.R.J."/>
            <person name="Gibson R."/>
            <person name="Gilby L.M."/>
            <person name="Gillett W."/>
            <person name="Glithero R.J."/>
            <person name="Grafham D.V."/>
            <person name="Griffiths C."/>
            <person name="Griffiths-Jones S."/>
            <person name="Grocock R."/>
            <person name="Hammond S."/>
            <person name="Harrison E.S.I."/>
            <person name="Hart E."/>
            <person name="Haugen E."/>
            <person name="Heath P.D."/>
            <person name="Holmes S."/>
            <person name="Holt K."/>
            <person name="Howden P.J."/>
            <person name="Hunt A.R."/>
            <person name="Hunt S.E."/>
            <person name="Hunter G."/>
            <person name="Isherwood J."/>
            <person name="James R."/>
            <person name="Johnson C."/>
            <person name="Johnson D."/>
            <person name="Joy A."/>
            <person name="Kay M."/>
            <person name="Kershaw J.K."/>
            <person name="Kibukawa M."/>
            <person name="Kimberley A.M."/>
            <person name="King A."/>
            <person name="Knights A.J."/>
            <person name="Lad H."/>
            <person name="Laird G."/>
            <person name="Lawlor S."/>
            <person name="Leongamornlert D.A."/>
            <person name="Lloyd D.M."/>
            <person name="Loveland J."/>
            <person name="Lovell J."/>
            <person name="Lush M.J."/>
            <person name="Lyne R."/>
            <person name="Martin S."/>
            <person name="Mashreghi-Mohammadi M."/>
            <person name="Matthews L."/>
            <person name="Matthews N.S.W."/>
            <person name="McLaren S."/>
            <person name="Milne S."/>
            <person name="Mistry S."/>
            <person name="Moore M.J.F."/>
            <person name="Nickerson T."/>
            <person name="O'Dell C.N."/>
            <person name="Oliver K."/>
            <person name="Palmeiri A."/>
            <person name="Palmer S.A."/>
            <person name="Parker A."/>
            <person name="Patel D."/>
            <person name="Pearce A.V."/>
            <person name="Peck A.I."/>
            <person name="Pelan S."/>
            <person name="Phelps K."/>
            <person name="Phillimore B.J."/>
            <person name="Plumb R."/>
            <person name="Rajan J."/>
            <person name="Raymond C."/>
            <person name="Rouse G."/>
            <person name="Saenphimmachak C."/>
            <person name="Sehra H.K."/>
            <person name="Sheridan E."/>
            <person name="Shownkeen R."/>
            <person name="Sims S."/>
            <person name="Skuce C.D."/>
            <person name="Smith M."/>
            <person name="Steward C."/>
            <person name="Subramanian S."/>
            <person name="Sycamore N."/>
            <person name="Tracey A."/>
            <person name="Tromans A."/>
            <person name="Van Helmond Z."/>
            <person name="Wall M."/>
            <person name="Wallis J.M."/>
            <person name="White S."/>
            <person name="Whitehead S.L."/>
            <person name="Wilkinson J.E."/>
            <person name="Willey D.L."/>
            <person name="Williams H."/>
            <person name="Wilming L."/>
            <person name="Wray P.W."/>
            <person name="Wu Z."/>
            <person name="Coulson A."/>
            <person name="Vaudin M."/>
            <person name="Sulston J.E."/>
            <person name="Durbin R.M."/>
            <person name="Hubbard T."/>
            <person name="Wooster R."/>
            <person name="Dunham I."/>
            <person name="Carter N.P."/>
            <person name="McVean G."/>
            <person name="Ross M.T."/>
            <person name="Harrow J."/>
            <person name="Olson M.V."/>
            <person name="Beck S."/>
            <person name="Rogers J."/>
            <person name="Bentley D.R."/>
        </authorList>
    </citation>
    <scope>NUCLEOTIDE SEQUENCE [LARGE SCALE GENOMIC DNA]</scope>
</reference>
<reference key="8">
    <citation type="submission" date="2005-09" db="EMBL/GenBank/DDBJ databases">
        <authorList>
            <person name="Mural R.J."/>
            <person name="Istrail S."/>
            <person name="Sutton G.G."/>
            <person name="Florea L."/>
            <person name="Halpern A.L."/>
            <person name="Mobarry C.M."/>
            <person name="Lippert R."/>
            <person name="Walenz B."/>
            <person name="Shatkay H."/>
            <person name="Dew I."/>
            <person name="Miller J.R."/>
            <person name="Flanigan M.J."/>
            <person name="Edwards N.J."/>
            <person name="Bolanos R."/>
            <person name="Fasulo D."/>
            <person name="Halldorsson B.V."/>
            <person name="Hannenhalli S."/>
            <person name="Turner R."/>
            <person name="Yooseph S."/>
            <person name="Lu F."/>
            <person name="Nusskern D.R."/>
            <person name="Shue B.C."/>
            <person name="Zheng X.H."/>
            <person name="Zhong F."/>
            <person name="Delcher A.L."/>
            <person name="Huson D.H."/>
            <person name="Kravitz S.A."/>
            <person name="Mouchard L."/>
            <person name="Reinert K."/>
            <person name="Remington K.A."/>
            <person name="Clark A.G."/>
            <person name="Waterman M.S."/>
            <person name="Eichler E.E."/>
            <person name="Adams M.D."/>
            <person name="Hunkapiller M.W."/>
            <person name="Myers E.W."/>
            <person name="Venter J.C."/>
        </authorList>
    </citation>
    <scope>NUCLEOTIDE SEQUENCE [LARGE SCALE GENOMIC DNA]</scope>
</reference>
<reference key="9">
    <citation type="journal article" date="2004" name="Genome Res.">
        <title>The status, quality, and expansion of the NIH full-length cDNA project: the Mammalian Gene Collection (MGC).</title>
        <authorList>
            <consortium name="The MGC Project Team"/>
        </authorList>
    </citation>
    <scope>NUCLEOTIDE SEQUENCE [LARGE SCALE MRNA]</scope>
    <source>
        <tissue>Ovary</tissue>
        <tissue>Pancreas</tissue>
        <tissue>Spleen</tissue>
    </source>
</reference>
<reference key="10">
    <citation type="journal article" date="1996" name="Carcinogenesis">
        <title>Human connexin 37 is polymorphic but not mutated in tumours.</title>
        <authorList>
            <person name="Krutovskikh V."/>
            <person name="Mironov N."/>
            <person name="Yamasaki H."/>
        </authorList>
    </citation>
    <scope>VARIANT ILE-130</scope>
</reference>
<reference key="11">
    <citation type="journal article" date="1999" name="J. Intern. Med.">
        <title>A genetic polymorphism in connexin 37 as a prognostic marker for atherosclerotic plaque development.</title>
        <authorList>
            <person name="Boerma M."/>
            <person name="Forsberg L."/>
            <person name="Van Zeijl L."/>
            <person name="Morgenstern R."/>
            <person name="De Faire U."/>
            <person name="Lemne C."/>
            <person name="Erlinge D."/>
            <person name="Thulin T."/>
            <person name="Hong Y."/>
            <person name="Cotgreave I.A."/>
        </authorList>
    </citation>
    <scope>VARIANT SER-319</scope>
</reference>
<reference key="12">
    <citation type="journal article" date="2000" name="Int. J. Cancer">
        <title>Human hemangiosarcomas have a common polymorphism but no mutations in the connexin37 gene.</title>
        <authorList>
            <person name="Saito T."/>
            <person name="Krutovskikh V."/>
            <person name="Marion M.J."/>
            <person name="Ishak K.G."/>
            <person name="Bennett W.P."/>
            <person name="Yamasaki H."/>
        </authorList>
    </citation>
    <scope>VARIANT SER-319</scope>
</reference>
<dbReference type="EMBL" id="M96789">
    <property type="protein sequence ID" value="AAA52558.2"/>
    <property type="molecule type" value="mRNA"/>
</dbReference>
<dbReference type="EMBL" id="AF139100">
    <property type="protein sequence ID" value="AAD31869.1"/>
    <property type="molecule type" value="Genomic_DNA"/>
</dbReference>
<dbReference type="EMBL" id="AF139101">
    <property type="protein sequence ID" value="AAD31870.1"/>
    <property type="molecule type" value="Genomic_DNA"/>
</dbReference>
<dbReference type="EMBL" id="AF139102">
    <property type="protein sequence ID" value="AAD31871.1"/>
    <property type="molecule type" value="Genomic_DNA"/>
</dbReference>
<dbReference type="EMBL" id="AF139103">
    <property type="protein sequence ID" value="AAD31872.1"/>
    <property type="molecule type" value="Genomic_DNA"/>
</dbReference>
<dbReference type="EMBL" id="AF139104">
    <property type="protein sequence ID" value="AAD31873.1"/>
    <property type="molecule type" value="Genomic_DNA"/>
</dbReference>
<dbReference type="EMBL" id="AF139105">
    <property type="protein sequence ID" value="AAD31874.1"/>
    <property type="molecule type" value="Genomic_DNA"/>
</dbReference>
<dbReference type="EMBL" id="AF181620">
    <property type="protein sequence ID" value="AAD56940.1"/>
    <property type="molecule type" value="mRNA"/>
</dbReference>
<dbReference type="EMBL" id="AF132674">
    <property type="protein sequence ID" value="AAF62342.1"/>
    <property type="molecule type" value="Genomic_DNA"/>
</dbReference>
<dbReference type="EMBL" id="AK291563">
    <property type="protein sequence ID" value="BAF84252.1"/>
    <property type="molecule type" value="mRNA"/>
</dbReference>
<dbReference type="EMBL" id="AL121988">
    <property type="status" value="NOT_ANNOTATED_CDS"/>
    <property type="molecule type" value="Genomic_DNA"/>
</dbReference>
<dbReference type="EMBL" id="CH471059">
    <property type="protein sequence ID" value="EAX07440.1"/>
    <property type="molecule type" value="Genomic_DNA"/>
</dbReference>
<dbReference type="EMBL" id="CH471059">
    <property type="protein sequence ID" value="EAX07441.1"/>
    <property type="molecule type" value="Genomic_DNA"/>
</dbReference>
<dbReference type="EMBL" id="BC027889">
    <property type="protein sequence ID" value="AAH27889.1"/>
    <property type="molecule type" value="mRNA"/>
</dbReference>
<dbReference type="EMBL" id="BC072389">
    <property type="protein sequence ID" value="AAH72389.1"/>
    <property type="molecule type" value="mRNA"/>
</dbReference>
<dbReference type="CCDS" id="CCDS30669.1"/>
<dbReference type="PIR" id="I55593">
    <property type="entry name" value="I55593"/>
</dbReference>
<dbReference type="RefSeq" id="NP_002051.2">
    <property type="nucleotide sequence ID" value="NM_002060.3"/>
</dbReference>
<dbReference type="RefSeq" id="XP_005270807.1">
    <property type="nucleotide sequence ID" value="XM_005270750.3"/>
</dbReference>
<dbReference type="RefSeq" id="XP_016856532.1">
    <property type="nucleotide sequence ID" value="XM_017001043.3"/>
</dbReference>
<dbReference type="RefSeq" id="XP_054191975.1">
    <property type="nucleotide sequence ID" value="XM_054336000.1"/>
</dbReference>
<dbReference type="RefSeq" id="XP_054191976.1">
    <property type="nucleotide sequence ID" value="XM_054336001.1"/>
</dbReference>
<dbReference type="SMR" id="P35212"/>
<dbReference type="BioGRID" id="108968">
    <property type="interactions" value="9"/>
</dbReference>
<dbReference type="FunCoup" id="P35212">
    <property type="interactions" value="18"/>
</dbReference>
<dbReference type="IntAct" id="P35212">
    <property type="interactions" value="7"/>
</dbReference>
<dbReference type="MINT" id="P35212"/>
<dbReference type="STRING" id="9606.ENSP00000343676"/>
<dbReference type="TCDB" id="1.A.24.1.6">
    <property type="family name" value="the gap junction-forming connexin (connexin) family"/>
</dbReference>
<dbReference type="iPTMnet" id="P35212"/>
<dbReference type="PhosphoSitePlus" id="P35212"/>
<dbReference type="BioMuta" id="GJA4"/>
<dbReference type="DMDM" id="8928555"/>
<dbReference type="MassIVE" id="P35212"/>
<dbReference type="PaxDb" id="9606-ENSP00000343676"/>
<dbReference type="PeptideAtlas" id="P35212"/>
<dbReference type="Antibodypedia" id="4590">
    <property type="antibodies" value="302 antibodies from 31 providers"/>
</dbReference>
<dbReference type="DNASU" id="2701"/>
<dbReference type="Ensembl" id="ENST00000342280.5">
    <property type="protein sequence ID" value="ENSP00000343676.4"/>
    <property type="gene ID" value="ENSG00000187513.9"/>
</dbReference>
<dbReference type="GeneID" id="2701"/>
<dbReference type="KEGG" id="hsa:2701"/>
<dbReference type="MANE-Select" id="ENST00000342280.5">
    <property type="protein sequence ID" value="ENSP00000343676.4"/>
    <property type="RefSeq nucleotide sequence ID" value="NM_002060.3"/>
    <property type="RefSeq protein sequence ID" value="NP_002051.2"/>
</dbReference>
<dbReference type="UCSC" id="uc001bya.3">
    <property type="organism name" value="human"/>
</dbReference>
<dbReference type="AGR" id="HGNC:4278"/>
<dbReference type="CTD" id="2701"/>
<dbReference type="DisGeNET" id="2701"/>
<dbReference type="GeneCards" id="GJA4"/>
<dbReference type="HGNC" id="HGNC:4278">
    <property type="gene designation" value="GJA4"/>
</dbReference>
<dbReference type="HPA" id="ENSG00000187513">
    <property type="expression patterns" value="Low tissue specificity"/>
</dbReference>
<dbReference type="MalaCards" id="GJA4"/>
<dbReference type="MIM" id="121012">
    <property type="type" value="gene"/>
</dbReference>
<dbReference type="neXtProt" id="NX_P35212"/>
<dbReference type="OpenTargets" id="ENSG00000187513"/>
<dbReference type="PharmGKB" id="PA28689"/>
<dbReference type="VEuPathDB" id="HostDB:ENSG00000187513"/>
<dbReference type="eggNOG" id="ENOG502QU20">
    <property type="taxonomic scope" value="Eukaryota"/>
</dbReference>
<dbReference type="GeneTree" id="ENSGT01090000260070"/>
<dbReference type="InParanoid" id="P35212"/>
<dbReference type="OMA" id="MWTYIIS"/>
<dbReference type="OrthoDB" id="9993956at2759"/>
<dbReference type="PAN-GO" id="P35212">
    <property type="GO annotations" value="3 GO annotations based on evolutionary models"/>
</dbReference>
<dbReference type="PhylomeDB" id="P35212"/>
<dbReference type="TreeFam" id="TF329606"/>
<dbReference type="PathwayCommons" id="P35212"/>
<dbReference type="Reactome" id="R-HSA-190861">
    <property type="pathway name" value="Gap junction assembly"/>
</dbReference>
<dbReference type="SignaLink" id="P35212"/>
<dbReference type="BioGRID-ORCS" id="2701">
    <property type="hits" value="11 hits in 1149 CRISPR screens"/>
</dbReference>
<dbReference type="GeneWiki" id="GJA4"/>
<dbReference type="GenomeRNAi" id="2701"/>
<dbReference type="Pharos" id="P35212">
    <property type="development level" value="Tbio"/>
</dbReference>
<dbReference type="PRO" id="PR:P35212"/>
<dbReference type="Proteomes" id="UP000005640">
    <property type="component" value="Chromosome 1"/>
</dbReference>
<dbReference type="RNAct" id="P35212">
    <property type="molecule type" value="protein"/>
</dbReference>
<dbReference type="Bgee" id="ENSG00000187513">
    <property type="expression patterns" value="Expressed in tibial artery and 144 other cell types or tissues"/>
</dbReference>
<dbReference type="ExpressionAtlas" id="P35212">
    <property type="expression patterns" value="baseline and differential"/>
</dbReference>
<dbReference type="GO" id="GO:0005922">
    <property type="term" value="C:connexin complex"/>
    <property type="evidence" value="ECO:0000318"/>
    <property type="project" value="GO_Central"/>
</dbReference>
<dbReference type="GO" id="GO:0005921">
    <property type="term" value="C:gap junction"/>
    <property type="evidence" value="ECO:0000304"/>
    <property type="project" value="ProtInc"/>
</dbReference>
<dbReference type="GO" id="GO:0005886">
    <property type="term" value="C:plasma membrane"/>
    <property type="evidence" value="ECO:0000304"/>
    <property type="project" value="ProtInc"/>
</dbReference>
<dbReference type="GO" id="GO:0005243">
    <property type="term" value="F:gap junction channel activity"/>
    <property type="evidence" value="ECO:0000318"/>
    <property type="project" value="GO_Central"/>
</dbReference>
<dbReference type="GO" id="GO:0001568">
    <property type="term" value="P:blood vessel development"/>
    <property type="evidence" value="ECO:0007669"/>
    <property type="project" value="Ensembl"/>
</dbReference>
<dbReference type="GO" id="GO:0007043">
    <property type="term" value="P:cell-cell junction assembly"/>
    <property type="evidence" value="ECO:0000304"/>
    <property type="project" value="ProtInc"/>
</dbReference>
<dbReference type="GO" id="GO:0007267">
    <property type="term" value="P:cell-cell signaling"/>
    <property type="evidence" value="ECO:0000318"/>
    <property type="project" value="GO_Central"/>
</dbReference>
<dbReference type="FunFam" id="1.20.1440.80:FF:000001">
    <property type="entry name" value="Gap junction alpha-1"/>
    <property type="match status" value="1"/>
</dbReference>
<dbReference type="Gene3D" id="1.20.1440.80">
    <property type="entry name" value="Gap junction channel protein cysteine-rich domain"/>
    <property type="match status" value="1"/>
</dbReference>
<dbReference type="InterPro" id="IPR000500">
    <property type="entry name" value="Connexin"/>
</dbReference>
<dbReference type="InterPro" id="IPR002263">
    <property type="entry name" value="Connexin37"/>
</dbReference>
<dbReference type="InterPro" id="IPR019570">
    <property type="entry name" value="Connexin_CCC"/>
</dbReference>
<dbReference type="InterPro" id="IPR017990">
    <property type="entry name" value="Connexin_CS"/>
</dbReference>
<dbReference type="InterPro" id="IPR013092">
    <property type="entry name" value="Connexin_N"/>
</dbReference>
<dbReference type="InterPro" id="IPR038359">
    <property type="entry name" value="Connexin_N_sf"/>
</dbReference>
<dbReference type="PANTHER" id="PTHR11984">
    <property type="entry name" value="CONNEXIN"/>
    <property type="match status" value="1"/>
</dbReference>
<dbReference type="PANTHER" id="PTHR11984:SF54">
    <property type="entry name" value="GAP JUNCTION ALPHA-4 PROTEIN"/>
    <property type="match status" value="1"/>
</dbReference>
<dbReference type="Pfam" id="PF00029">
    <property type="entry name" value="Connexin"/>
    <property type="match status" value="1"/>
</dbReference>
<dbReference type="PRINTS" id="PR00206">
    <property type="entry name" value="CONNEXIN"/>
</dbReference>
<dbReference type="PRINTS" id="PR01134">
    <property type="entry name" value="CONNEXINA4"/>
</dbReference>
<dbReference type="SMART" id="SM00037">
    <property type="entry name" value="CNX"/>
    <property type="match status" value="1"/>
</dbReference>
<dbReference type="SMART" id="SM01089">
    <property type="entry name" value="Connexin_CCC"/>
    <property type="match status" value="1"/>
</dbReference>
<dbReference type="PROSITE" id="PS00407">
    <property type="entry name" value="CONNEXINS_1"/>
    <property type="match status" value="1"/>
</dbReference>
<dbReference type="PROSITE" id="PS00408">
    <property type="entry name" value="CONNEXINS_2"/>
    <property type="match status" value="1"/>
</dbReference>